<protein>
    <recommendedName>
        <fullName evidence="2">Small ribosomal subunit protein eS24y</fullName>
    </recommendedName>
    <alternativeName>
        <fullName>40S ribosomal protein S24-2</fullName>
    </alternativeName>
</protein>
<evidence type="ECO:0000256" key="1">
    <source>
        <dbReference type="SAM" id="MobiDB-lite"/>
    </source>
</evidence>
<evidence type="ECO:0000303" key="2">
    <source>
    </source>
</evidence>
<evidence type="ECO:0000305" key="3"/>
<comment type="similarity">
    <text evidence="3">Belongs to the eukaryotic ribosomal protein eS24 family.</text>
</comment>
<feature type="chain" id="PRO_0000250533" description="Small ribosomal subunit protein eS24y">
    <location>
        <begin position="1"/>
        <end position="133"/>
    </location>
</feature>
<feature type="region of interest" description="Disordered" evidence="1">
    <location>
        <begin position="104"/>
        <end position="133"/>
    </location>
</feature>
<feature type="compositionally biased region" description="Basic residues" evidence="1">
    <location>
        <begin position="109"/>
        <end position="125"/>
    </location>
</feature>
<feature type="sequence conflict" description="In Ref. 4; AAM63791." evidence="3" ref="4">
    <original>T</original>
    <variation>A</variation>
    <location>
        <position position="130"/>
    </location>
</feature>
<accession>Q8LC83</accession>
<accession>Q94F06</accession>
<sequence length="133" mass="15419">MAEKAVTIRTRNFMTNRLLARKQFVIDVLHPGRANVSKAELKEKLARMYEVKDPNAIFCFKFRTHFGGGKSSGYGLIYDTVENAKKFEPKYRLIRNGLDTKIEKSRKQIKERKNRAKKIRGVKKTKAGDTKKK</sequence>
<gene>
    <name type="primary">RPS24B</name>
    <name type="ordered locus">At5g28060</name>
    <name type="ORF">F15F15.130</name>
</gene>
<name>RS242_ARATH</name>
<keyword id="KW-1185">Reference proteome</keyword>
<keyword id="KW-0687">Ribonucleoprotein</keyword>
<keyword id="KW-0689">Ribosomal protein</keyword>
<reference key="1">
    <citation type="journal article" date="2000" name="Nature">
        <title>Sequence and analysis of chromosome 5 of the plant Arabidopsis thaliana.</title>
        <authorList>
            <person name="Tabata S."/>
            <person name="Kaneko T."/>
            <person name="Nakamura Y."/>
            <person name="Kotani H."/>
            <person name="Kato T."/>
            <person name="Asamizu E."/>
            <person name="Miyajima N."/>
            <person name="Sasamoto S."/>
            <person name="Kimura T."/>
            <person name="Hosouchi T."/>
            <person name="Kawashima K."/>
            <person name="Kohara M."/>
            <person name="Matsumoto M."/>
            <person name="Matsuno A."/>
            <person name="Muraki A."/>
            <person name="Nakayama S."/>
            <person name="Nakazaki N."/>
            <person name="Naruo K."/>
            <person name="Okumura S."/>
            <person name="Shinpo S."/>
            <person name="Takeuchi C."/>
            <person name="Wada T."/>
            <person name="Watanabe A."/>
            <person name="Yamada M."/>
            <person name="Yasuda M."/>
            <person name="Sato S."/>
            <person name="de la Bastide M."/>
            <person name="Huang E."/>
            <person name="Spiegel L."/>
            <person name="Gnoj L."/>
            <person name="O'Shaughnessy A."/>
            <person name="Preston R."/>
            <person name="Habermann K."/>
            <person name="Murray J."/>
            <person name="Johnson D."/>
            <person name="Rohlfing T."/>
            <person name="Nelson J."/>
            <person name="Stoneking T."/>
            <person name="Pepin K."/>
            <person name="Spieth J."/>
            <person name="Sekhon M."/>
            <person name="Armstrong J."/>
            <person name="Becker M."/>
            <person name="Belter E."/>
            <person name="Cordum H."/>
            <person name="Cordes M."/>
            <person name="Courtney L."/>
            <person name="Courtney W."/>
            <person name="Dante M."/>
            <person name="Du H."/>
            <person name="Edwards J."/>
            <person name="Fryman J."/>
            <person name="Haakensen B."/>
            <person name="Lamar E."/>
            <person name="Latreille P."/>
            <person name="Leonard S."/>
            <person name="Meyer R."/>
            <person name="Mulvaney E."/>
            <person name="Ozersky P."/>
            <person name="Riley A."/>
            <person name="Strowmatt C."/>
            <person name="Wagner-McPherson C."/>
            <person name="Wollam A."/>
            <person name="Yoakum M."/>
            <person name="Bell M."/>
            <person name="Dedhia N."/>
            <person name="Parnell L."/>
            <person name="Shah R."/>
            <person name="Rodriguez M."/>
            <person name="Hoon See L."/>
            <person name="Vil D."/>
            <person name="Baker J."/>
            <person name="Kirchoff K."/>
            <person name="Toth K."/>
            <person name="King L."/>
            <person name="Bahret A."/>
            <person name="Miller B."/>
            <person name="Marra M.A."/>
            <person name="Martienssen R."/>
            <person name="McCombie W.R."/>
            <person name="Wilson R.K."/>
            <person name="Murphy G."/>
            <person name="Bancroft I."/>
            <person name="Volckaert G."/>
            <person name="Wambutt R."/>
            <person name="Duesterhoeft A."/>
            <person name="Stiekema W."/>
            <person name="Pohl T."/>
            <person name="Entian K.-D."/>
            <person name="Terryn N."/>
            <person name="Hartley N."/>
            <person name="Bent E."/>
            <person name="Johnson S."/>
            <person name="Langham S.-A."/>
            <person name="McCullagh B."/>
            <person name="Robben J."/>
            <person name="Grymonprez B."/>
            <person name="Zimmermann W."/>
            <person name="Ramsperger U."/>
            <person name="Wedler H."/>
            <person name="Balke K."/>
            <person name="Wedler E."/>
            <person name="Peters S."/>
            <person name="van Staveren M."/>
            <person name="Dirkse W."/>
            <person name="Mooijman P."/>
            <person name="Klein Lankhorst R."/>
            <person name="Weitzenegger T."/>
            <person name="Bothe G."/>
            <person name="Rose M."/>
            <person name="Hauf J."/>
            <person name="Berneiser S."/>
            <person name="Hempel S."/>
            <person name="Feldpausch M."/>
            <person name="Lamberth S."/>
            <person name="Villarroel R."/>
            <person name="Gielen J."/>
            <person name="Ardiles W."/>
            <person name="Bents O."/>
            <person name="Lemcke K."/>
            <person name="Kolesov G."/>
            <person name="Mayer K.F.X."/>
            <person name="Rudd S."/>
            <person name="Schoof H."/>
            <person name="Schueller C."/>
            <person name="Zaccaria P."/>
            <person name="Mewes H.-W."/>
            <person name="Bevan M."/>
            <person name="Fransz P.F."/>
        </authorList>
    </citation>
    <scope>NUCLEOTIDE SEQUENCE [LARGE SCALE GENOMIC DNA]</scope>
    <source>
        <strain>cv. Columbia</strain>
    </source>
</reference>
<reference key="2">
    <citation type="journal article" date="2017" name="Plant J.">
        <title>Araport11: a complete reannotation of the Arabidopsis thaliana reference genome.</title>
        <authorList>
            <person name="Cheng C.Y."/>
            <person name="Krishnakumar V."/>
            <person name="Chan A.P."/>
            <person name="Thibaud-Nissen F."/>
            <person name="Schobel S."/>
            <person name="Town C.D."/>
        </authorList>
    </citation>
    <scope>GENOME REANNOTATION</scope>
    <source>
        <strain>cv. Columbia</strain>
    </source>
</reference>
<reference key="3">
    <citation type="journal article" date="2003" name="Science">
        <title>Empirical analysis of transcriptional activity in the Arabidopsis genome.</title>
        <authorList>
            <person name="Yamada K."/>
            <person name="Lim J."/>
            <person name="Dale J.M."/>
            <person name="Chen H."/>
            <person name="Shinn P."/>
            <person name="Palm C.J."/>
            <person name="Southwick A.M."/>
            <person name="Wu H.C."/>
            <person name="Kim C.J."/>
            <person name="Nguyen M."/>
            <person name="Pham P.K."/>
            <person name="Cheuk R.F."/>
            <person name="Karlin-Newmann G."/>
            <person name="Liu S.X."/>
            <person name="Lam B."/>
            <person name="Sakano H."/>
            <person name="Wu T."/>
            <person name="Yu G."/>
            <person name="Miranda M."/>
            <person name="Quach H.L."/>
            <person name="Tripp M."/>
            <person name="Chang C.H."/>
            <person name="Lee J.M."/>
            <person name="Toriumi M.J."/>
            <person name="Chan M.M."/>
            <person name="Tang C.C."/>
            <person name="Onodera C.S."/>
            <person name="Deng J.M."/>
            <person name="Akiyama K."/>
            <person name="Ansari Y."/>
            <person name="Arakawa T."/>
            <person name="Banh J."/>
            <person name="Banno F."/>
            <person name="Bowser L."/>
            <person name="Brooks S.Y."/>
            <person name="Carninci P."/>
            <person name="Chao Q."/>
            <person name="Choy N."/>
            <person name="Enju A."/>
            <person name="Goldsmith A.D."/>
            <person name="Gurjal M."/>
            <person name="Hansen N.F."/>
            <person name="Hayashizaki Y."/>
            <person name="Johnson-Hopson C."/>
            <person name="Hsuan V.W."/>
            <person name="Iida K."/>
            <person name="Karnes M."/>
            <person name="Khan S."/>
            <person name="Koesema E."/>
            <person name="Ishida J."/>
            <person name="Jiang P.X."/>
            <person name="Jones T."/>
            <person name="Kawai J."/>
            <person name="Kamiya A."/>
            <person name="Meyers C."/>
            <person name="Nakajima M."/>
            <person name="Narusaka M."/>
            <person name="Seki M."/>
            <person name="Sakurai T."/>
            <person name="Satou M."/>
            <person name="Tamse R."/>
            <person name="Vaysberg M."/>
            <person name="Wallender E.K."/>
            <person name="Wong C."/>
            <person name="Yamamura Y."/>
            <person name="Yuan S."/>
            <person name="Shinozaki K."/>
            <person name="Davis R.W."/>
            <person name="Theologis A."/>
            <person name="Ecker J.R."/>
        </authorList>
    </citation>
    <scope>NUCLEOTIDE SEQUENCE [LARGE SCALE MRNA]</scope>
    <source>
        <strain>cv. Columbia</strain>
    </source>
</reference>
<reference key="4">
    <citation type="submission" date="2002-03" db="EMBL/GenBank/DDBJ databases">
        <title>Full-length cDNA from Arabidopsis thaliana.</title>
        <authorList>
            <person name="Brover V.V."/>
            <person name="Troukhan M.E."/>
            <person name="Alexandrov N.A."/>
            <person name="Lu Y.-P."/>
            <person name="Flavell R.B."/>
            <person name="Feldmann K.A."/>
        </authorList>
    </citation>
    <scope>NUCLEOTIDE SEQUENCE [LARGE SCALE MRNA]</scope>
</reference>
<reference key="5">
    <citation type="journal article" date="2001" name="Plant Physiol.">
        <title>The organization of cytoplasmic ribosomal protein genes in the Arabidopsis genome.</title>
        <authorList>
            <person name="Barakat A."/>
            <person name="Szick-Miranda K."/>
            <person name="Chang I.-F."/>
            <person name="Guyot R."/>
            <person name="Blanc G."/>
            <person name="Cooke R."/>
            <person name="Delseny M."/>
            <person name="Bailey-Serres J."/>
        </authorList>
    </citation>
    <scope>GENE FAMILY ORGANIZATION</scope>
    <scope>NOMENCLATURE</scope>
</reference>
<reference key="6">
    <citation type="journal article" date="2023" name="Plant Cell">
        <title>An updated nomenclature for plant ribosomal protein genes.</title>
        <authorList>
            <person name="Scarpin M.R."/>
            <person name="Busche M."/>
            <person name="Martinez R.E."/>
            <person name="Harper L.C."/>
            <person name="Reiser L."/>
            <person name="Szakonyi D."/>
            <person name="Merchante C."/>
            <person name="Lan T."/>
            <person name="Xiong W."/>
            <person name="Mo B."/>
            <person name="Tang G."/>
            <person name="Chen X."/>
            <person name="Bailey-Serres J."/>
            <person name="Browning K.S."/>
            <person name="Brunkard J.O."/>
        </authorList>
    </citation>
    <scope>NOMENCLATURE</scope>
</reference>
<proteinExistence type="evidence at transcript level"/>
<organism>
    <name type="scientific">Arabidopsis thaliana</name>
    <name type="common">Mouse-ear cress</name>
    <dbReference type="NCBI Taxonomy" id="3702"/>
    <lineage>
        <taxon>Eukaryota</taxon>
        <taxon>Viridiplantae</taxon>
        <taxon>Streptophyta</taxon>
        <taxon>Embryophyta</taxon>
        <taxon>Tracheophyta</taxon>
        <taxon>Spermatophyta</taxon>
        <taxon>Magnoliopsida</taxon>
        <taxon>eudicotyledons</taxon>
        <taxon>Gunneridae</taxon>
        <taxon>Pentapetalae</taxon>
        <taxon>rosids</taxon>
        <taxon>malvids</taxon>
        <taxon>Brassicales</taxon>
        <taxon>Brassicaceae</taxon>
        <taxon>Camelineae</taxon>
        <taxon>Arabidopsis</taxon>
    </lineage>
</organism>
<dbReference type="EMBL" id="AC007627">
    <property type="status" value="NOT_ANNOTATED_CDS"/>
    <property type="molecule type" value="Genomic_DNA"/>
</dbReference>
<dbReference type="EMBL" id="CP002688">
    <property type="protein sequence ID" value="AED93771.1"/>
    <property type="molecule type" value="Genomic_DNA"/>
</dbReference>
<dbReference type="EMBL" id="AF386992">
    <property type="protein sequence ID" value="AAK62437.1"/>
    <property type="molecule type" value="mRNA"/>
</dbReference>
<dbReference type="EMBL" id="AY072478">
    <property type="protein sequence ID" value="AAL66893.1"/>
    <property type="molecule type" value="mRNA"/>
</dbReference>
<dbReference type="EMBL" id="AY086740">
    <property type="protein sequence ID" value="AAM63791.1"/>
    <property type="molecule type" value="mRNA"/>
</dbReference>
<dbReference type="RefSeq" id="NP_198158.1">
    <property type="nucleotide sequence ID" value="NM_122689.4"/>
</dbReference>
<dbReference type="SMR" id="Q8LC83"/>
<dbReference type="BioGRID" id="18152">
    <property type="interactions" value="143"/>
</dbReference>
<dbReference type="FunCoup" id="Q8LC83">
    <property type="interactions" value="3489"/>
</dbReference>
<dbReference type="IntAct" id="Q8LC83">
    <property type="interactions" value="2"/>
</dbReference>
<dbReference type="STRING" id="3702.Q8LC83"/>
<dbReference type="PaxDb" id="3702-AT5G28060.1"/>
<dbReference type="ProteomicsDB" id="226828"/>
<dbReference type="EnsemblPlants" id="AT5G28060.1">
    <property type="protein sequence ID" value="AT5G28060.1"/>
    <property type="gene ID" value="AT5G28060"/>
</dbReference>
<dbReference type="GeneID" id="832878"/>
<dbReference type="Gramene" id="AT5G28060.1">
    <property type="protein sequence ID" value="AT5G28060.1"/>
    <property type="gene ID" value="AT5G28060"/>
</dbReference>
<dbReference type="KEGG" id="ath:AT5G28060"/>
<dbReference type="Araport" id="AT5G28060"/>
<dbReference type="TAIR" id="AT5G28060">
    <property type="gene designation" value="RPS24B"/>
</dbReference>
<dbReference type="eggNOG" id="KOG3424">
    <property type="taxonomic scope" value="Eukaryota"/>
</dbReference>
<dbReference type="HOGENOM" id="CLU_107248_1_0_1"/>
<dbReference type="InParanoid" id="Q8LC83"/>
<dbReference type="OMA" id="QGKQMVI"/>
<dbReference type="PhylomeDB" id="Q8LC83"/>
<dbReference type="PRO" id="PR:Q8LC83"/>
<dbReference type="Proteomes" id="UP000006548">
    <property type="component" value="Chromosome 5"/>
</dbReference>
<dbReference type="ExpressionAtlas" id="Q8LC83">
    <property type="expression patterns" value="baseline and differential"/>
</dbReference>
<dbReference type="GO" id="GO:0022626">
    <property type="term" value="C:cytosolic ribosome"/>
    <property type="evidence" value="ECO:0007005"/>
    <property type="project" value="TAIR"/>
</dbReference>
<dbReference type="GO" id="GO:0022627">
    <property type="term" value="C:cytosolic small ribosomal subunit"/>
    <property type="evidence" value="ECO:0007005"/>
    <property type="project" value="TAIR"/>
</dbReference>
<dbReference type="GO" id="GO:0009505">
    <property type="term" value="C:plant-type cell wall"/>
    <property type="evidence" value="ECO:0007005"/>
    <property type="project" value="TAIR"/>
</dbReference>
<dbReference type="GO" id="GO:0009536">
    <property type="term" value="C:plastid"/>
    <property type="evidence" value="ECO:0007005"/>
    <property type="project" value="TAIR"/>
</dbReference>
<dbReference type="GO" id="GO:0003729">
    <property type="term" value="F:mRNA binding"/>
    <property type="evidence" value="ECO:0000314"/>
    <property type="project" value="TAIR"/>
</dbReference>
<dbReference type="GO" id="GO:0003735">
    <property type="term" value="F:structural constituent of ribosome"/>
    <property type="evidence" value="ECO:0000314"/>
    <property type="project" value="CAFA"/>
</dbReference>
<dbReference type="GO" id="GO:0006412">
    <property type="term" value="P:translation"/>
    <property type="evidence" value="ECO:0007669"/>
    <property type="project" value="InterPro"/>
</dbReference>
<dbReference type="FunFam" id="3.30.70.3370:FF:000001">
    <property type="entry name" value="40S ribosomal protein S24"/>
    <property type="match status" value="1"/>
</dbReference>
<dbReference type="Gene3D" id="3.30.70.3370">
    <property type="match status" value="1"/>
</dbReference>
<dbReference type="HAMAP" id="MF_00545">
    <property type="entry name" value="Ribosomal_eS24"/>
    <property type="match status" value="1"/>
</dbReference>
<dbReference type="InterPro" id="IPR053709">
    <property type="entry name" value="eRP_eS24_sf"/>
</dbReference>
<dbReference type="InterPro" id="IPR001976">
    <property type="entry name" value="Ribosomal_eS24"/>
</dbReference>
<dbReference type="InterPro" id="IPR018098">
    <property type="entry name" value="Ribosomal_eS24_CS"/>
</dbReference>
<dbReference type="InterPro" id="IPR012678">
    <property type="entry name" value="Ribosomal_uL23/eL15/eS24_sf"/>
</dbReference>
<dbReference type="PANTHER" id="PTHR10496">
    <property type="entry name" value="40S RIBOSOMAL PROTEIN S24"/>
    <property type="match status" value="1"/>
</dbReference>
<dbReference type="Pfam" id="PF01282">
    <property type="entry name" value="Ribosomal_S24e"/>
    <property type="match status" value="1"/>
</dbReference>
<dbReference type="SUPFAM" id="SSF54189">
    <property type="entry name" value="Ribosomal proteins S24e, L23 and L15e"/>
    <property type="match status" value="1"/>
</dbReference>
<dbReference type="PROSITE" id="PS00529">
    <property type="entry name" value="RIBOSOMAL_S24E"/>
    <property type="match status" value="1"/>
</dbReference>